<name>PTH_MYCPN</name>
<evidence type="ECO:0000255" key="1">
    <source>
        <dbReference type="HAMAP-Rule" id="MF_00083"/>
    </source>
</evidence>
<proteinExistence type="inferred from homology"/>
<accession>P78034</accession>
<dbReference type="EC" id="3.1.1.29" evidence="1"/>
<dbReference type="EMBL" id="U00089">
    <property type="protein sequence ID" value="AAB96258.1"/>
    <property type="molecule type" value="Genomic_DNA"/>
</dbReference>
<dbReference type="PIR" id="S73936">
    <property type="entry name" value="S73936"/>
</dbReference>
<dbReference type="RefSeq" id="NP_109909.1">
    <property type="nucleotide sequence ID" value="NC_000912.1"/>
</dbReference>
<dbReference type="RefSeq" id="WP_010874578.1">
    <property type="nucleotide sequence ID" value="NZ_OU342337.1"/>
</dbReference>
<dbReference type="SMR" id="P78034"/>
<dbReference type="IntAct" id="P78034">
    <property type="interactions" value="4"/>
</dbReference>
<dbReference type="STRING" id="272634.MPN_221"/>
<dbReference type="EnsemblBacteria" id="AAB96258">
    <property type="protein sequence ID" value="AAB96258"/>
    <property type="gene ID" value="MPN_221"/>
</dbReference>
<dbReference type="GeneID" id="66609133"/>
<dbReference type="KEGG" id="mpn:MPN_221"/>
<dbReference type="PATRIC" id="fig|272634.6.peg.240"/>
<dbReference type="HOGENOM" id="CLU_062456_4_1_14"/>
<dbReference type="OrthoDB" id="9800507at2"/>
<dbReference type="BioCyc" id="MPNE272634:G1GJ3-356-MONOMER"/>
<dbReference type="Proteomes" id="UP000000808">
    <property type="component" value="Chromosome"/>
</dbReference>
<dbReference type="GO" id="GO:0005737">
    <property type="term" value="C:cytoplasm"/>
    <property type="evidence" value="ECO:0007669"/>
    <property type="project" value="UniProtKB-SubCell"/>
</dbReference>
<dbReference type="GO" id="GO:0004045">
    <property type="term" value="F:peptidyl-tRNA hydrolase activity"/>
    <property type="evidence" value="ECO:0007669"/>
    <property type="project" value="UniProtKB-UniRule"/>
</dbReference>
<dbReference type="GO" id="GO:0000049">
    <property type="term" value="F:tRNA binding"/>
    <property type="evidence" value="ECO:0007669"/>
    <property type="project" value="UniProtKB-UniRule"/>
</dbReference>
<dbReference type="GO" id="GO:0006515">
    <property type="term" value="P:protein quality control for misfolded or incompletely synthesized proteins"/>
    <property type="evidence" value="ECO:0007669"/>
    <property type="project" value="UniProtKB-UniRule"/>
</dbReference>
<dbReference type="GO" id="GO:0072344">
    <property type="term" value="P:rescue of stalled ribosome"/>
    <property type="evidence" value="ECO:0007669"/>
    <property type="project" value="UniProtKB-UniRule"/>
</dbReference>
<dbReference type="CDD" id="cd00462">
    <property type="entry name" value="PTH"/>
    <property type="match status" value="1"/>
</dbReference>
<dbReference type="Gene3D" id="3.40.50.1470">
    <property type="entry name" value="Peptidyl-tRNA hydrolase"/>
    <property type="match status" value="1"/>
</dbReference>
<dbReference type="HAMAP" id="MF_00083">
    <property type="entry name" value="Pept_tRNA_hydro_bact"/>
    <property type="match status" value="1"/>
</dbReference>
<dbReference type="InterPro" id="IPR001328">
    <property type="entry name" value="Pept_tRNA_hydro"/>
</dbReference>
<dbReference type="InterPro" id="IPR018171">
    <property type="entry name" value="Pept_tRNA_hydro_CS"/>
</dbReference>
<dbReference type="InterPro" id="IPR036416">
    <property type="entry name" value="Pept_tRNA_hydro_sf"/>
</dbReference>
<dbReference type="NCBIfam" id="TIGR00447">
    <property type="entry name" value="pth"/>
    <property type="match status" value="1"/>
</dbReference>
<dbReference type="PANTHER" id="PTHR17224">
    <property type="entry name" value="PEPTIDYL-TRNA HYDROLASE"/>
    <property type="match status" value="1"/>
</dbReference>
<dbReference type="PANTHER" id="PTHR17224:SF1">
    <property type="entry name" value="PEPTIDYL-TRNA HYDROLASE"/>
    <property type="match status" value="1"/>
</dbReference>
<dbReference type="Pfam" id="PF01195">
    <property type="entry name" value="Pept_tRNA_hydro"/>
    <property type="match status" value="1"/>
</dbReference>
<dbReference type="SUPFAM" id="SSF53178">
    <property type="entry name" value="Peptidyl-tRNA hydrolase-like"/>
    <property type="match status" value="1"/>
</dbReference>
<dbReference type="PROSITE" id="PS01195">
    <property type="entry name" value="PEPT_TRNA_HYDROL_1"/>
    <property type="match status" value="1"/>
</dbReference>
<dbReference type="PROSITE" id="PS01196">
    <property type="entry name" value="PEPT_TRNA_HYDROL_2"/>
    <property type="match status" value="1"/>
</dbReference>
<keyword id="KW-0963">Cytoplasm</keyword>
<keyword id="KW-0378">Hydrolase</keyword>
<keyword id="KW-1185">Reference proteome</keyword>
<keyword id="KW-0694">RNA-binding</keyword>
<keyword id="KW-0820">tRNA-binding</keyword>
<protein>
    <recommendedName>
        <fullName evidence="1">Peptidyl-tRNA hydrolase</fullName>
        <shortName evidence="1">Pth</shortName>
        <ecNumber evidence="1">3.1.1.29</ecNumber>
    </recommendedName>
</protein>
<feature type="chain" id="PRO_0000187777" description="Peptidyl-tRNA hydrolase">
    <location>
        <begin position="1"/>
        <end position="188"/>
    </location>
</feature>
<feature type="active site" description="Proton acceptor" evidence="1">
    <location>
        <position position="22"/>
    </location>
</feature>
<feature type="binding site" evidence="1">
    <location>
        <position position="17"/>
    </location>
    <ligand>
        <name>tRNA</name>
        <dbReference type="ChEBI" id="CHEBI:17843"/>
    </ligand>
</feature>
<feature type="binding site" evidence="1">
    <location>
        <position position="65"/>
    </location>
    <ligand>
        <name>tRNA</name>
        <dbReference type="ChEBI" id="CHEBI:17843"/>
    </ligand>
</feature>
<feature type="binding site" evidence="1">
    <location>
        <position position="67"/>
    </location>
    <ligand>
        <name>tRNA</name>
        <dbReference type="ChEBI" id="CHEBI:17843"/>
    </ligand>
</feature>
<feature type="binding site" evidence="1">
    <location>
        <position position="113"/>
    </location>
    <ligand>
        <name>tRNA</name>
        <dbReference type="ChEBI" id="CHEBI:17843"/>
    </ligand>
</feature>
<feature type="site" description="Discriminates between blocked and unblocked aminoacyl-tRNA" evidence="1">
    <location>
        <position position="12"/>
    </location>
</feature>
<feature type="site" description="Stabilizes the basic form of H active site to accept a proton" evidence="1">
    <location>
        <position position="92"/>
    </location>
</feature>
<gene>
    <name evidence="1" type="primary">pth</name>
    <name type="ordered locus">MPN_221</name>
    <name type="ORF">MP610</name>
</gene>
<comment type="function">
    <text evidence="1">Hydrolyzes ribosome-free peptidyl-tRNAs (with 1 or more amino acids incorporated), which drop off the ribosome during protein synthesis, or as a result of ribosome stalling.</text>
</comment>
<comment type="function">
    <text evidence="1">Catalyzes the release of premature peptidyl moieties from peptidyl-tRNA molecules trapped in stalled 50S ribosomal subunits, and thus maintains levels of free tRNAs and 50S ribosomes.</text>
</comment>
<comment type="catalytic activity">
    <reaction evidence="1">
        <text>an N-acyl-L-alpha-aminoacyl-tRNA + H2O = an N-acyl-L-amino acid + a tRNA + H(+)</text>
        <dbReference type="Rhea" id="RHEA:54448"/>
        <dbReference type="Rhea" id="RHEA-COMP:10123"/>
        <dbReference type="Rhea" id="RHEA-COMP:13883"/>
        <dbReference type="ChEBI" id="CHEBI:15377"/>
        <dbReference type="ChEBI" id="CHEBI:15378"/>
        <dbReference type="ChEBI" id="CHEBI:59874"/>
        <dbReference type="ChEBI" id="CHEBI:78442"/>
        <dbReference type="ChEBI" id="CHEBI:138191"/>
        <dbReference type="EC" id="3.1.1.29"/>
    </reaction>
</comment>
<comment type="subunit">
    <text evidence="1">Monomer.</text>
</comment>
<comment type="subcellular location">
    <subcellularLocation>
        <location evidence="1">Cytoplasm</location>
    </subcellularLocation>
</comment>
<comment type="similarity">
    <text evidence="1">Belongs to the PTH family.</text>
</comment>
<sequence length="188" mass="21417">MDKLRLVVGLGNLGKQYAETRHNAGFKVIDRLLSLYHVQLEERNNLGEFILLRKHKVVLAKPNTYMNHSGKFVKWACQNWNIKPDKVMVVYDELAFPLGTVRLKMQGSANNHNGIKSVIAHLNTEHFNRLRFGIKSDNTSNILHEVVMSEFTPAERNLLETALTKAIEALKGYIDGVTMLKLMEVFNA</sequence>
<reference key="1">
    <citation type="journal article" date="1996" name="Nucleic Acids Res.">
        <title>Complete sequence analysis of the genome of the bacterium Mycoplasma pneumoniae.</title>
        <authorList>
            <person name="Himmelreich R."/>
            <person name="Hilbert H."/>
            <person name="Plagens H."/>
            <person name="Pirkl E."/>
            <person name="Li B.-C."/>
            <person name="Herrmann R."/>
        </authorList>
    </citation>
    <scope>NUCLEOTIDE SEQUENCE [LARGE SCALE GENOMIC DNA]</scope>
    <source>
        <strain>ATCC 29342 / M129 / Subtype 1</strain>
    </source>
</reference>
<organism>
    <name type="scientific">Mycoplasma pneumoniae (strain ATCC 29342 / M129 / Subtype 1)</name>
    <name type="common">Mycoplasmoides pneumoniae</name>
    <dbReference type="NCBI Taxonomy" id="272634"/>
    <lineage>
        <taxon>Bacteria</taxon>
        <taxon>Bacillati</taxon>
        <taxon>Mycoplasmatota</taxon>
        <taxon>Mycoplasmoidales</taxon>
        <taxon>Mycoplasmoidaceae</taxon>
        <taxon>Mycoplasmoides</taxon>
    </lineage>
</organism>